<protein>
    <recommendedName>
        <fullName evidence="1">ATP-dependent Clp protease ATP-binding subunit ClpX</fullName>
    </recommendedName>
</protein>
<accession>A1RL88</accession>
<reference key="1">
    <citation type="submission" date="2006-12" db="EMBL/GenBank/DDBJ databases">
        <title>Complete sequence of Shewanella sp. W3-18-1.</title>
        <authorList>
            <consortium name="US DOE Joint Genome Institute"/>
            <person name="Copeland A."/>
            <person name="Lucas S."/>
            <person name="Lapidus A."/>
            <person name="Barry K."/>
            <person name="Detter J.C."/>
            <person name="Glavina del Rio T."/>
            <person name="Hammon N."/>
            <person name="Israni S."/>
            <person name="Dalin E."/>
            <person name="Tice H."/>
            <person name="Pitluck S."/>
            <person name="Chain P."/>
            <person name="Malfatti S."/>
            <person name="Shin M."/>
            <person name="Vergez L."/>
            <person name="Schmutz J."/>
            <person name="Larimer F."/>
            <person name="Land M."/>
            <person name="Hauser L."/>
            <person name="Kyrpides N."/>
            <person name="Lykidis A."/>
            <person name="Tiedje J."/>
            <person name="Richardson P."/>
        </authorList>
    </citation>
    <scope>NUCLEOTIDE SEQUENCE [LARGE SCALE GENOMIC DNA]</scope>
    <source>
        <strain>W3-18-1</strain>
    </source>
</reference>
<proteinExistence type="inferred from homology"/>
<comment type="function">
    <text evidence="1">ATP-dependent specificity component of the Clp protease. It directs the protease to specific substrates. Can perform chaperone functions in the absence of ClpP.</text>
</comment>
<comment type="subunit">
    <text evidence="1">Component of the ClpX-ClpP complex. Forms a hexameric ring that, in the presence of ATP, binds to fourteen ClpP subunits assembled into a disk-like structure with a central cavity, resembling the structure of eukaryotic proteasomes.</text>
</comment>
<comment type="similarity">
    <text evidence="1">Belongs to the ClpX chaperone family.</text>
</comment>
<evidence type="ECO:0000255" key="1">
    <source>
        <dbReference type="HAMAP-Rule" id="MF_00175"/>
    </source>
</evidence>
<evidence type="ECO:0000255" key="2">
    <source>
        <dbReference type="PROSITE-ProRule" id="PRU01250"/>
    </source>
</evidence>
<organism>
    <name type="scientific">Shewanella sp. (strain W3-18-1)</name>
    <dbReference type="NCBI Taxonomy" id="351745"/>
    <lineage>
        <taxon>Bacteria</taxon>
        <taxon>Pseudomonadati</taxon>
        <taxon>Pseudomonadota</taxon>
        <taxon>Gammaproteobacteria</taxon>
        <taxon>Alteromonadales</taxon>
        <taxon>Shewanellaceae</taxon>
        <taxon>Shewanella</taxon>
    </lineage>
</organism>
<feature type="chain" id="PRO_1000024659" description="ATP-dependent Clp protease ATP-binding subunit ClpX">
    <location>
        <begin position="1"/>
        <end position="426"/>
    </location>
</feature>
<feature type="domain" description="ClpX-type ZB" evidence="2">
    <location>
        <begin position="4"/>
        <end position="57"/>
    </location>
</feature>
<feature type="binding site" evidence="2">
    <location>
        <position position="16"/>
    </location>
    <ligand>
        <name>Zn(2+)</name>
        <dbReference type="ChEBI" id="CHEBI:29105"/>
    </ligand>
</feature>
<feature type="binding site" evidence="2">
    <location>
        <position position="19"/>
    </location>
    <ligand>
        <name>Zn(2+)</name>
        <dbReference type="ChEBI" id="CHEBI:29105"/>
    </ligand>
</feature>
<feature type="binding site" evidence="2">
    <location>
        <position position="38"/>
    </location>
    <ligand>
        <name>Zn(2+)</name>
        <dbReference type="ChEBI" id="CHEBI:29105"/>
    </ligand>
</feature>
<feature type="binding site" evidence="2">
    <location>
        <position position="41"/>
    </location>
    <ligand>
        <name>Zn(2+)</name>
        <dbReference type="ChEBI" id="CHEBI:29105"/>
    </ligand>
</feature>
<feature type="binding site" evidence="1">
    <location>
        <begin position="121"/>
        <end position="128"/>
    </location>
    <ligand>
        <name>ATP</name>
        <dbReference type="ChEBI" id="CHEBI:30616"/>
    </ligand>
</feature>
<keyword id="KW-0067">ATP-binding</keyword>
<keyword id="KW-0143">Chaperone</keyword>
<keyword id="KW-0479">Metal-binding</keyword>
<keyword id="KW-0547">Nucleotide-binding</keyword>
<keyword id="KW-0862">Zinc</keyword>
<sequence>MGDNKNNGDSGKLLYCSFCGKSQHEVRKLIAGPSVYVCDECVELCNDIIREEIKEISPKRDSDKLPTPHELRAHLDDYVIGQDRAKKVLSVAVYNHYKRLKNSSPKDGVELGKSNILLIGPTGSGKTLLAETLARSLNVPFTMADATTLTEAGYVGEDVENIIQKLLQKCDYDVEKAQRGIVYIDEIDKISRKSDNPSITRDVSGEGVQQALLKLIEGTVAAVPPQGGRKHPQQEFLQVDTSKILFICGGAFAGLEKVIEQRAHVGSGIGFGAQVKGEKDKATISETLSQVEPGDLVKYGLIPEFIGRLPVVATLTELDEEALVQILSQPKNALTKQYSALFEMEGVELEFREDALKAIAHKAMSRKTGARGLRSIVESILLDTMYDIPSVDGVVKAVVDESVVNGESAPILIYEHNETQAASGEQ</sequence>
<dbReference type="EMBL" id="CP000503">
    <property type="protein sequence ID" value="ABM25433.1"/>
    <property type="molecule type" value="Genomic_DNA"/>
</dbReference>
<dbReference type="RefSeq" id="WP_011789890.1">
    <property type="nucleotide sequence ID" value="NC_008750.1"/>
</dbReference>
<dbReference type="SMR" id="A1RL88"/>
<dbReference type="GeneID" id="67443009"/>
<dbReference type="KEGG" id="shw:Sputw3181_2610"/>
<dbReference type="HOGENOM" id="CLU_014218_8_2_6"/>
<dbReference type="Proteomes" id="UP000002597">
    <property type="component" value="Chromosome"/>
</dbReference>
<dbReference type="GO" id="GO:0009376">
    <property type="term" value="C:HslUV protease complex"/>
    <property type="evidence" value="ECO:0007669"/>
    <property type="project" value="TreeGrafter"/>
</dbReference>
<dbReference type="GO" id="GO:0005524">
    <property type="term" value="F:ATP binding"/>
    <property type="evidence" value="ECO:0007669"/>
    <property type="project" value="UniProtKB-UniRule"/>
</dbReference>
<dbReference type="GO" id="GO:0016887">
    <property type="term" value="F:ATP hydrolysis activity"/>
    <property type="evidence" value="ECO:0007669"/>
    <property type="project" value="InterPro"/>
</dbReference>
<dbReference type="GO" id="GO:0140662">
    <property type="term" value="F:ATP-dependent protein folding chaperone"/>
    <property type="evidence" value="ECO:0007669"/>
    <property type="project" value="InterPro"/>
</dbReference>
<dbReference type="GO" id="GO:0046983">
    <property type="term" value="F:protein dimerization activity"/>
    <property type="evidence" value="ECO:0007669"/>
    <property type="project" value="InterPro"/>
</dbReference>
<dbReference type="GO" id="GO:0051082">
    <property type="term" value="F:unfolded protein binding"/>
    <property type="evidence" value="ECO:0007669"/>
    <property type="project" value="UniProtKB-UniRule"/>
</dbReference>
<dbReference type="GO" id="GO:0008270">
    <property type="term" value="F:zinc ion binding"/>
    <property type="evidence" value="ECO:0007669"/>
    <property type="project" value="InterPro"/>
</dbReference>
<dbReference type="GO" id="GO:0051301">
    <property type="term" value="P:cell division"/>
    <property type="evidence" value="ECO:0007669"/>
    <property type="project" value="TreeGrafter"/>
</dbReference>
<dbReference type="GO" id="GO:0051603">
    <property type="term" value="P:proteolysis involved in protein catabolic process"/>
    <property type="evidence" value="ECO:0007669"/>
    <property type="project" value="TreeGrafter"/>
</dbReference>
<dbReference type="CDD" id="cd19497">
    <property type="entry name" value="RecA-like_ClpX"/>
    <property type="match status" value="1"/>
</dbReference>
<dbReference type="FunFam" id="1.10.8.60:FF:000002">
    <property type="entry name" value="ATP-dependent Clp protease ATP-binding subunit ClpX"/>
    <property type="match status" value="1"/>
</dbReference>
<dbReference type="FunFam" id="3.40.50.300:FF:000005">
    <property type="entry name" value="ATP-dependent Clp protease ATP-binding subunit ClpX"/>
    <property type="match status" value="1"/>
</dbReference>
<dbReference type="Gene3D" id="1.10.8.60">
    <property type="match status" value="1"/>
</dbReference>
<dbReference type="Gene3D" id="6.20.220.10">
    <property type="entry name" value="ClpX chaperone, C4-type zinc finger domain"/>
    <property type="match status" value="1"/>
</dbReference>
<dbReference type="Gene3D" id="3.40.50.300">
    <property type="entry name" value="P-loop containing nucleotide triphosphate hydrolases"/>
    <property type="match status" value="1"/>
</dbReference>
<dbReference type="HAMAP" id="MF_00175">
    <property type="entry name" value="ClpX"/>
    <property type="match status" value="1"/>
</dbReference>
<dbReference type="InterPro" id="IPR003593">
    <property type="entry name" value="AAA+_ATPase"/>
</dbReference>
<dbReference type="InterPro" id="IPR050052">
    <property type="entry name" value="ATP-dep_Clp_protease_ClpX"/>
</dbReference>
<dbReference type="InterPro" id="IPR003959">
    <property type="entry name" value="ATPase_AAA_core"/>
</dbReference>
<dbReference type="InterPro" id="IPR019489">
    <property type="entry name" value="Clp_ATPase_C"/>
</dbReference>
<dbReference type="InterPro" id="IPR004487">
    <property type="entry name" value="Clp_protease_ATP-bd_su_ClpX"/>
</dbReference>
<dbReference type="InterPro" id="IPR046425">
    <property type="entry name" value="ClpX_bact"/>
</dbReference>
<dbReference type="InterPro" id="IPR027417">
    <property type="entry name" value="P-loop_NTPase"/>
</dbReference>
<dbReference type="InterPro" id="IPR010603">
    <property type="entry name" value="Znf_CppX_C4"/>
</dbReference>
<dbReference type="InterPro" id="IPR038366">
    <property type="entry name" value="Znf_CppX_C4_sf"/>
</dbReference>
<dbReference type="NCBIfam" id="TIGR00382">
    <property type="entry name" value="clpX"/>
    <property type="match status" value="1"/>
</dbReference>
<dbReference type="NCBIfam" id="NF003745">
    <property type="entry name" value="PRK05342.1"/>
    <property type="match status" value="1"/>
</dbReference>
<dbReference type="PANTHER" id="PTHR48102:SF7">
    <property type="entry name" value="ATP-DEPENDENT CLP PROTEASE ATP-BINDING SUBUNIT CLPX-LIKE, MITOCHONDRIAL"/>
    <property type="match status" value="1"/>
</dbReference>
<dbReference type="PANTHER" id="PTHR48102">
    <property type="entry name" value="ATP-DEPENDENT CLP PROTEASE ATP-BINDING SUBUNIT CLPX-LIKE, MITOCHONDRIAL-RELATED"/>
    <property type="match status" value="1"/>
</dbReference>
<dbReference type="Pfam" id="PF07724">
    <property type="entry name" value="AAA_2"/>
    <property type="match status" value="1"/>
</dbReference>
<dbReference type="Pfam" id="PF10431">
    <property type="entry name" value="ClpB_D2-small"/>
    <property type="match status" value="1"/>
</dbReference>
<dbReference type="Pfam" id="PF06689">
    <property type="entry name" value="zf-C4_ClpX"/>
    <property type="match status" value="1"/>
</dbReference>
<dbReference type="SMART" id="SM00382">
    <property type="entry name" value="AAA"/>
    <property type="match status" value="1"/>
</dbReference>
<dbReference type="SMART" id="SM01086">
    <property type="entry name" value="ClpB_D2-small"/>
    <property type="match status" value="1"/>
</dbReference>
<dbReference type="SMART" id="SM00994">
    <property type="entry name" value="zf-C4_ClpX"/>
    <property type="match status" value="1"/>
</dbReference>
<dbReference type="SUPFAM" id="SSF57716">
    <property type="entry name" value="Glucocorticoid receptor-like (DNA-binding domain)"/>
    <property type="match status" value="1"/>
</dbReference>
<dbReference type="SUPFAM" id="SSF52540">
    <property type="entry name" value="P-loop containing nucleoside triphosphate hydrolases"/>
    <property type="match status" value="1"/>
</dbReference>
<dbReference type="PROSITE" id="PS51902">
    <property type="entry name" value="CLPX_ZB"/>
    <property type="match status" value="1"/>
</dbReference>
<gene>
    <name evidence="1" type="primary">clpX</name>
    <name type="ordered locus">Sputw3181_2610</name>
</gene>
<name>CLPX_SHESW</name>